<dbReference type="EMBL" id="M69217">
    <property type="protein sequence ID" value="AAA23125.1"/>
    <property type="molecule type" value="Genomic_DNA"/>
</dbReference>
<dbReference type="EMBL" id="AE001363">
    <property type="protein sequence ID" value="AAD18288.1"/>
    <property type="molecule type" value="Genomic_DNA"/>
</dbReference>
<dbReference type="EMBL" id="AE002161">
    <property type="protein sequence ID" value="AAF38452.1"/>
    <property type="molecule type" value="Genomic_DNA"/>
</dbReference>
<dbReference type="EMBL" id="BA000008">
    <property type="protein sequence ID" value="BAA98345.1"/>
    <property type="molecule type" value="Genomic_DNA"/>
</dbReference>
<dbReference type="EMBL" id="AE009440">
    <property type="protein sequence ID" value="AAP98069.1"/>
    <property type="molecule type" value="Genomic_DNA"/>
</dbReference>
<dbReference type="PIR" id="G86507">
    <property type="entry name" value="G86507"/>
</dbReference>
<dbReference type="PIR" id="S19022">
    <property type="entry name" value="S19022"/>
</dbReference>
<dbReference type="RefSeq" id="NP_224343.1">
    <property type="nucleotide sequence ID" value="NC_000922.1"/>
</dbReference>
<dbReference type="RefSeq" id="WP_010882785.1">
    <property type="nucleotide sequence ID" value="NZ_LN847257.1"/>
</dbReference>
<dbReference type="SMR" id="P31682"/>
<dbReference type="STRING" id="406984.CPK_ORF00647"/>
<dbReference type="GeneID" id="45050180"/>
<dbReference type="KEGG" id="cpa:CP_0637"/>
<dbReference type="KEGG" id="cpj:groES"/>
<dbReference type="KEGG" id="cpn:CPn_0135"/>
<dbReference type="KEGG" id="cpt:CpB0136"/>
<dbReference type="PATRIC" id="fig|115713.3.peg.152"/>
<dbReference type="eggNOG" id="COG0234">
    <property type="taxonomic scope" value="Bacteria"/>
</dbReference>
<dbReference type="HOGENOM" id="CLU_132825_2_1_0"/>
<dbReference type="OMA" id="EDFLIMR"/>
<dbReference type="OrthoDB" id="9806791at2"/>
<dbReference type="Proteomes" id="UP000000583">
    <property type="component" value="Chromosome"/>
</dbReference>
<dbReference type="Proteomes" id="UP000000801">
    <property type="component" value="Chromosome"/>
</dbReference>
<dbReference type="GO" id="GO:0005737">
    <property type="term" value="C:cytoplasm"/>
    <property type="evidence" value="ECO:0007669"/>
    <property type="project" value="UniProtKB-SubCell"/>
</dbReference>
<dbReference type="GO" id="GO:0005524">
    <property type="term" value="F:ATP binding"/>
    <property type="evidence" value="ECO:0007669"/>
    <property type="project" value="InterPro"/>
</dbReference>
<dbReference type="GO" id="GO:0046872">
    <property type="term" value="F:metal ion binding"/>
    <property type="evidence" value="ECO:0007669"/>
    <property type="project" value="TreeGrafter"/>
</dbReference>
<dbReference type="GO" id="GO:0044183">
    <property type="term" value="F:protein folding chaperone"/>
    <property type="evidence" value="ECO:0007669"/>
    <property type="project" value="InterPro"/>
</dbReference>
<dbReference type="GO" id="GO:0051087">
    <property type="term" value="F:protein-folding chaperone binding"/>
    <property type="evidence" value="ECO:0007669"/>
    <property type="project" value="TreeGrafter"/>
</dbReference>
<dbReference type="GO" id="GO:0051082">
    <property type="term" value="F:unfolded protein binding"/>
    <property type="evidence" value="ECO:0007669"/>
    <property type="project" value="TreeGrafter"/>
</dbReference>
<dbReference type="GO" id="GO:0051085">
    <property type="term" value="P:chaperone cofactor-dependent protein refolding"/>
    <property type="evidence" value="ECO:0007669"/>
    <property type="project" value="TreeGrafter"/>
</dbReference>
<dbReference type="CDD" id="cd00320">
    <property type="entry name" value="cpn10"/>
    <property type="match status" value="1"/>
</dbReference>
<dbReference type="FunFam" id="2.30.33.40:FF:000007">
    <property type="entry name" value="10 kDa chaperonin"/>
    <property type="match status" value="1"/>
</dbReference>
<dbReference type="Gene3D" id="2.30.33.40">
    <property type="entry name" value="GroES chaperonin"/>
    <property type="match status" value="1"/>
</dbReference>
<dbReference type="HAMAP" id="MF_00580">
    <property type="entry name" value="CH10"/>
    <property type="match status" value="1"/>
</dbReference>
<dbReference type="InterPro" id="IPR020818">
    <property type="entry name" value="Chaperonin_GroES"/>
</dbReference>
<dbReference type="InterPro" id="IPR037124">
    <property type="entry name" value="Chaperonin_GroES_sf"/>
</dbReference>
<dbReference type="InterPro" id="IPR018369">
    <property type="entry name" value="Chaprnonin_Cpn10_CS"/>
</dbReference>
<dbReference type="InterPro" id="IPR011032">
    <property type="entry name" value="GroES-like_sf"/>
</dbReference>
<dbReference type="NCBIfam" id="NF001531">
    <property type="entry name" value="PRK00364.2-2"/>
    <property type="match status" value="1"/>
</dbReference>
<dbReference type="NCBIfam" id="NF001533">
    <property type="entry name" value="PRK00364.2-4"/>
    <property type="match status" value="1"/>
</dbReference>
<dbReference type="PANTHER" id="PTHR10772">
    <property type="entry name" value="10 KDA HEAT SHOCK PROTEIN"/>
    <property type="match status" value="1"/>
</dbReference>
<dbReference type="PANTHER" id="PTHR10772:SF58">
    <property type="entry name" value="CO-CHAPERONIN GROES"/>
    <property type="match status" value="1"/>
</dbReference>
<dbReference type="Pfam" id="PF00166">
    <property type="entry name" value="Cpn10"/>
    <property type="match status" value="1"/>
</dbReference>
<dbReference type="PRINTS" id="PR00297">
    <property type="entry name" value="CHAPERONIN10"/>
</dbReference>
<dbReference type="SMART" id="SM00883">
    <property type="entry name" value="Cpn10"/>
    <property type="match status" value="1"/>
</dbReference>
<dbReference type="SUPFAM" id="SSF50129">
    <property type="entry name" value="GroES-like"/>
    <property type="match status" value="1"/>
</dbReference>
<dbReference type="PROSITE" id="PS00681">
    <property type="entry name" value="CHAPERONINS_CPN10"/>
    <property type="match status" value="1"/>
</dbReference>
<sequence>MSDQATTLRIKPLGDRILVKREEEEATARGGIILPDTAKKKQDRAEVLVLGTGKRTDDGTLLPFEVQVGDIILMDKYAGQEITIDDEEYVILQSSEIMAVLK</sequence>
<feature type="chain" id="PRO_0000174728" description="Co-chaperonin GroES">
    <location>
        <begin position="1"/>
        <end position="102"/>
    </location>
</feature>
<reference key="1">
    <citation type="journal article" date="1991" name="Infect. Immun.">
        <title>Isolation and sequence analysis of the Chlamydia pneumoniae GroE operon.</title>
        <authorList>
            <person name="Kikuta L.C."/>
            <person name="Puolakkainen M."/>
            <person name="Kuo C.C."/>
            <person name="Campbell L.A."/>
        </authorList>
    </citation>
    <scope>NUCLEOTIDE SEQUENCE [GENOMIC DNA]</scope>
    <source>
        <strain>AR39</strain>
    </source>
</reference>
<reference key="2">
    <citation type="journal article" date="1999" name="Nat. Genet.">
        <title>Comparative genomes of Chlamydia pneumoniae and C. trachomatis.</title>
        <authorList>
            <person name="Kalman S."/>
            <person name="Mitchell W.P."/>
            <person name="Marathe R."/>
            <person name="Lammel C.J."/>
            <person name="Fan J."/>
            <person name="Hyman R.W."/>
            <person name="Olinger L."/>
            <person name="Grimwood J."/>
            <person name="Davis R.W."/>
            <person name="Stephens R.S."/>
        </authorList>
    </citation>
    <scope>NUCLEOTIDE SEQUENCE [LARGE SCALE GENOMIC DNA]</scope>
    <source>
        <strain>CWL029</strain>
    </source>
</reference>
<reference key="3">
    <citation type="journal article" date="2000" name="Nucleic Acids Res.">
        <title>Genome sequences of Chlamydia trachomatis MoPn and Chlamydia pneumoniae AR39.</title>
        <authorList>
            <person name="Read T.D."/>
            <person name="Brunham R.C."/>
            <person name="Shen C."/>
            <person name="Gill S.R."/>
            <person name="Heidelberg J.F."/>
            <person name="White O."/>
            <person name="Hickey E.K."/>
            <person name="Peterson J.D."/>
            <person name="Utterback T.R."/>
            <person name="Berry K.J."/>
            <person name="Bass S."/>
            <person name="Linher K.D."/>
            <person name="Weidman J.F."/>
            <person name="Khouri H.M."/>
            <person name="Craven B."/>
            <person name="Bowman C."/>
            <person name="Dodson R.J."/>
            <person name="Gwinn M.L."/>
            <person name="Nelson W.C."/>
            <person name="DeBoy R.T."/>
            <person name="Kolonay J.F."/>
            <person name="McClarty G."/>
            <person name="Salzberg S.L."/>
            <person name="Eisen J.A."/>
            <person name="Fraser C.M."/>
        </authorList>
    </citation>
    <scope>NUCLEOTIDE SEQUENCE [LARGE SCALE GENOMIC DNA]</scope>
    <source>
        <strain>AR39</strain>
    </source>
</reference>
<reference key="4">
    <citation type="journal article" date="2000" name="Nucleic Acids Res.">
        <title>Comparison of whole genome sequences of Chlamydia pneumoniae J138 from Japan and CWL029 from USA.</title>
        <authorList>
            <person name="Shirai M."/>
            <person name="Hirakawa H."/>
            <person name="Kimoto M."/>
            <person name="Tabuchi M."/>
            <person name="Kishi F."/>
            <person name="Ouchi K."/>
            <person name="Shiba T."/>
            <person name="Ishii K."/>
            <person name="Hattori M."/>
            <person name="Kuhara S."/>
            <person name="Nakazawa T."/>
        </authorList>
    </citation>
    <scope>NUCLEOTIDE SEQUENCE [LARGE SCALE GENOMIC DNA]</scope>
    <source>
        <strain>J138</strain>
    </source>
</reference>
<reference key="5">
    <citation type="submission" date="2002-05" db="EMBL/GenBank/DDBJ databases">
        <title>The genome sequence of Chlamydia pneumoniae TW183 and comparison with other Chlamydia strains based on whole genome sequence analysis.</title>
        <authorList>
            <person name="Geng M.M."/>
            <person name="Schuhmacher A."/>
            <person name="Muehldorfer I."/>
            <person name="Bensch K.W."/>
            <person name="Schaefer K.P."/>
            <person name="Schneider S."/>
            <person name="Pohl T."/>
            <person name="Essig A."/>
            <person name="Marre R."/>
            <person name="Melchers K."/>
        </authorList>
    </citation>
    <scope>NUCLEOTIDE SEQUENCE [LARGE SCALE GENOMIC DNA]</scope>
    <source>
        <strain>TW-183</strain>
    </source>
</reference>
<keyword id="KW-0143">Chaperone</keyword>
<keyword id="KW-0963">Cytoplasm</keyword>
<protein>
    <recommendedName>
        <fullName evidence="1">Co-chaperonin GroES</fullName>
    </recommendedName>
    <alternativeName>
        <fullName evidence="1">10 kDa chaperonin</fullName>
    </alternativeName>
    <alternativeName>
        <fullName evidence="1">Chaperonin-10</fullName>
        <shortName evidence="1">Cpn10</shortName>
    </alternativeName>
</protein>
<evidence type="ECO:0000255" key="1">
    <source>
        <dbReference type="HAMAP-Rule" id="MF_00580"/>
    </source>
</evidence>
<evidence type="ECO:0000305" key="2"/>
<accession>P31682</accession>
<accession>Q9JQ63</accession>
<proteinExistence type="inferred from homology"/>
<comment type="function">
    <text evidence="1">Together with the chaperonin GroEL, plays an essential role in assisting protein folding. The GroEL-GroES system forms a nano-cage that allows encapsulation of the non-native substrate proteins and provides a physical environment optimized to promote and accelerate protein folding. GroES binds to the apical surface of the GroEL ring, thereby capping the opening of the GroEL channel.</text>
</comment>
<comment type="subunit">
    <text evidence="1">Heptamer of 7 subunits arranged in a ring. Interacts with the chaperonin GroEL.</text>
</comment>
<comment type="subcellular location">
    <subcellularLocation>
        <location evidence="1">Cytoplasm</location>
    </subcellularLocation>
</comment>
<comment type="similarity">
    <text evidence="1 2">Belongs to the GroES chaperonin family.</text>
</comment>
<gene>
    <name evidence="1" type="primary">groES</name>
    <name evidence="1" type="synonym">groS</name>
    <name type="synonym">mopB</name>
    <name type="ordered locus">CPn_0135</name>
    <name type="ordered locus">CP_0637</name>
    <name type="ordered locus">CpB0136</name>
</gene>
<name>CH10_CHLPN</name>
<organism>
    <name type="scientific">Chlamydia pneumoniae</name>
    <name type="common">Chlamydophila pneumoniae</name>
    <dbReference type="NCBI Taxonomy" id="83558"/>
    <lineage>
        <taxon>Bacteria</taxon>
        <taxon>Pseudomonadati</taxon>
        <taxon>Chlamydiota</taxon>
        <taxon>Chlamydiia</taxon>
        <taxon>Chlamydiales</taxon>
        <taxon>Chlamydiaceae</taxon>
        <taxon>Chlamydia/Chlamydophila group</taxon>
        <taxon>Chlamydia</taxon>
    </lineage>
</organism>